<evidence type="ECO:0000255" key="1">
    <source>
        <dbReference type="HAMAP-Rule" id="MF_00087"/>
    </source>
</evidence>
<organism>
    <name type="scientific">Aliivibrio fischeri (strain MJ11)</name>
    <name type="common">Vibrio fischeri</name>
    <dbReference type="NCBI Taxonomy" id="388396"/>
    <lineage>
        <taxon>Bacteria</taxon>
        <taxon>Pseudomonadati</taxon>
        <taxon>Pseudomonadota</taxon>
        <taxon>Gammaproteobacteria</taxon>
        <taxon>Vibrionales</taxon>
        <taxon>Vibrionaceae</taxon>
        <taxon>Aliivibrio</taxon>
    </lineage>
</organism>
<reference key="1">
    <citation type="submission" date="2008-08" db="EMBL/GenBank/DDBJ databases">
        <title>Complete sequence of Vibrio fischeri strain MJ11.</title>
        <authorList>
            <person name="Mandel M.J."/>
            <person name="Stabb E.V."/>
            <person name="Ruby E.G."/>
            <person name="Ferriera S."/>
            <person name="Johnson J."/>
            <person name="Kravitz S."/>
            <person name="Beeson K."/>
            <person name="Sutton G."/>
            <person name="Rogers Y.-H."/>
            <person name="Friedman R."/>
            <person name="Frazier M."/>
            <person name="Venter J.C."/>
        </authorList>
    </citation>
    <scope>NUCLEOTIDE SEQUENCE [LARGE SCALE GENOMIC DNA]</scope>
    <source>
        <strain>MJ11</strain>
    </source>
</reference>
<keyword id="KW-0521">NADP</keyword>
<keyword id="KW-0560">Oxidoreductase</keyword>
<keyword id="KW-0627">Porphyrin biosynthesis</keyword>
<accession>B5FBW9</accession>
<dbReference type="EC" id="1.2.1.70" evidence="1"/>
<dbReference type="EMBL" id="CP001139">
    <property type="protein sequence ID" value="ACH65238.1"/>
    <property type="molecule type" value="Genomic_DNA"/>
</dbReference>
<dbReference type="RefSeq" id="WP_005418199.1">
    <property type="nucleotide sequence ID" value="NC_011184.1"/>
</dbReference>
<dbReference type="SMR" id="B5FBW9"/>
<dbReference type="KEGG" id="vfm:VFMJ11_0803"/>
<dbReference type="HOGENOM" id="CLU_035113_2_2_6"/>
<dbReference type="UniPathway" id="UPA00251">
    <property type="reaction ID" value="UER00316"/>
</dbReference>
<dbReference type="Proteomes" id="UP000001857">
    <property type="component" value="Chromosome I"/>
</dbReference>
<dbReference type="GO" id="GO:0008883">
    <property type="term" value="F:glutamyl-tRNA reductase activity"/>
    <property type="evidence" value="ECO:0007669"/>
    <property type="project" value="UniProtKB-UniRule"/>
</dbReference>
<dbReference type="GO" id="GO:0050661">
    <property type="term" value="F:NADP binding"/>
    <property type="evidence" value="ECO:0007669"/>
    <property type="project" value="InterPro"/>
</dbReference>
<dbReference type="GO" id="GO:0019353">
    <property type="term" value="P:protoporphyrinogen IX biosynthetic process from glutamate"/>
    <property type="evidence" value="ECO:0007669"/>
    <property type="project" value="TreeGrafter"/>
</dbReference>
<dbReference type="CDD" id="cd05213">
    <property type="entry name" value="NAD_bind_Glutamyl_tRNA_reduct"/>
    <property type="match status" value="1"/>
</dbReference>
<dbReference type="FunFam" id="3.30.460.30:FF:000001">
    <property type="entry name" value="Glutamyl-tRNA reductase"/>
    <property type="match status" value="1"/>
</dbReference>
<dbReference type="FunFam" id="3.40.50.720:FF:000031">
    <property type="entry name" value="Glutamyl-tRNA reductase"/>
    <property type="match status" value="1"/>
</dbReference>
<dbReference type="Gene3D" id="3.30.460.30">
    <property type="entry name" value="Glutamyl-tRNA reductase, N-terminal domain"/>
    <property type="match status" value="1"/>
</dbReference>
<dbReference type="Gene3D" id="3.40.50.720">
    <property type="entry name" value="NAD(P)-binding Rossmann-like Domain"/>
    <property type="match status" value="1"/>
</dbReference>
<dbReference type="HAMAP" id="MF_00087">
    <property type="entry name" value="Glu_tRNA_reductase"/>
    <property type="match status" value="1"/>
</dbReference>
<dbReference type="InterPro" id="IPR000343">
    <property type="entry name" value="4pyrrol_synth_GluRdtase"/>
</dbReference>
<dbReference type="InterPro" id="IPR015896">
    <property type="entry name" value="4pyrrol_synth_GluRdtase_dimer"/>
</dbReference>
<dbReference type="InterPro" id="IPR015895">
    <property type="entry name" value="4pyrrol_synth_GluRdtase_N"/>
</dbReference>
<dbReference type="InterPro" id="IPR018214">
    <property type="entry name" value="GluRdtase_CS"/>
</dbReference>
<dbReference type="InterPro" id="IPR036453">
    <property type="entry name" value="GluRdtase_dimer_dom_sf"/>
</dbReference>
<dbReference type="InterPro" id="IPR036343">
    <property type="entry name" value="GluRdtase_N_sf"/>
</dbReference>
<dbReference type="InterPro" id="IPR036291">
    <property type="entry name" value="NAD(P)-bd_dom_sf"/>
</dbReference>
<dbReference type="InterPro" id="IPR006151">
    <property type="entry name" value="Shikm_DH/Glu-tRNA_Rdtase"/>
</dbReference>
<dbReference type="NCBIfam" id="TIGR01035">
    <property type="entry name" value="hemA"/>
    <property type="match status" value="1"/>
</dbReference>
<dbReference type="PANTHER" id="PTHR43013">
    <property type="entry name" value="GLUTAMYL-TRNA REDUCTASE"/>
    <property type="match status" value="1"/>
</dbReference>
<dbReference type="PANTHER" id="PTHR43013:SF1">
    <property type="entry name" value="GLUTAMYL-TRNA REDUCTASE"/>
    <property type="match status" value="1"/>
</dbReference>
<dbReference type="Pfam" id="PF00745">
    <property type="entry name" value="GlutR_dimer"/>
    <property type="match status" value="1"/>
</dbReference>
<dbReference type="Pfam" id="PF05201">
    <property type="entry name" value="GlutR_N"/>
    <property type="match status" value="1"/>
</dbReference>
<dbReference type="Pfam" id="PF01488">
    <property type="entry name" value="Shikimate_DH"/>
    <property type="match status" value="1"/>
</dbReference>
<dbReference type="PIRSF" id="PIRSF000445">
    <property type="entry name" value="4pyrrol_synth_GluRdtase"/>
    <property type="match status" value="1"/>
</dbReference>
<dbReference type="SUPFAM" id="SSF69742">
    <property type="entry name" value="Glutamyl tRNA-reductase catalytic, N-terminal domain"/>
    <property type="match status" value="1"/>
</dbReference>
<dbReference type="SUPFAM" id="SSF69075">
    <property type="entry name" value="Glutamyl tRNA-reductase dimerization domain"/>
    <property type="match status" value="1"/>
</dbReference>
<dbReference type="SUPFAM" id="SSF51735">
    <property type="entry name" value="NAD(P)-binding Rossmann-fold domains"/>
    <property type="match status" value="1"/>
</dbReference>
<dbReference type="PROSITE" id="PS00747">
    <property type="entry name" value="GLUTR"/>
    <property type="match status" value="1"/>
</dbReference>
<protein>
    <recommendedName>
        <fullName evidence="1">Glutamyl-tRNA reductase</fullName>
        <shortName evidence="1">GluTR</shortName>
        <ecNumber evidence="1">1.2.1.70</ecNumber>
    </recommendedName>
</protein>
<name>HEM1_ALIFM</name>
<sequence length="418" mass="46067">MSLLVIGINHTSASVDLREKVAFSPEKLTKALDELKNSDAIQSGVILSTCNRTEIYCEVKHGISSGYVINWLAEFHHVALEILMPSIYIHEEQAAVKHLMRVSCGLDSLVLGEPQILGQVKKAFADAREHNAVEGTIEKLFQQDFSVAKRVRTETNIGGNAVSVAYAACTLARQIFESLSDSTVLLVGAGETIELVAKHLDDSGCKRLIVANRTRERAMGLAEQFNAEVISLPEIPEHLPKADIIISSTASPLPIIGKGMVESALKLRKHQPMLFVDIAVPRDIEGEVAELNDAYLYSVDDLQSIIDHNIEQRKIEAIQAEAIVSEESAEFMTWIRSRQAVNSIRQYRENSEAMRIELLQKSMQALASGQNPEKVLAELSNKLTNKLIHAPTLAMQQAAKNGETEKLTVIRTTIGLDN</sequence>
<comment type="function">
    <text evidence="1">Catalyzes the NADPH-dependent reduction of glutamyl-tRNA(Glu) to glutamate 1-semialdehyde (GSA).</text>
</comment>
<comment type="catalytic activity">
    <reaction evidence="1">
        <text>(S)-4-amino-5-oxopentanoate + tRNA(Glu) + NADP(+) = L-glutamyl-tRNA(Glu) + NADPH + H(+)</text>
        <dbReference type="Rhea" id="RHEA:12344"/>
        <dbReference type="Rhea" id="RHEA-COMP:9663"/>
        <dbReference type="Rhea" id="RHEA-COMP:9680"/>
        <dbReference type="ChEBI" id="CHEBI:15378"/>
        <dbReference type="ChEBI" id="CHEBI:57501"/>
        <dbReference type="ChEBI" id="CHEBI:57783"/>
        <dbReference type="ChEBI" id="CHEBI:58349"/>
        <dbReference type="ChEBI" id="CHEBI:78442"/>
        <dbReference type="ChEBI" id="CHEBI:78520"/>
        <dbReference type="EC" id="1.2.1.70"/>
    </reaction>
</comment>
<comment type="pathway">
    <text evidence="1">Porphyrin-containing compound metabolism; protoporphyrin-IX biosynthesis; 5-aminolevulinate from L-glutamyl-tRNA(Glu): step 1/2.</text>
</comment>
<comment type="subunit">
    <text evidence="1">Homodimer.</text>
</comment>
<comment type="domain">
    <text evidence="1">Possesses an unusual extended V-shaped dimeric structure with each monomer consisting of three distinct domains arranged along a curved 'spinal' alpha-helix. The N-terminal catalytic domain specifically recognizes the glutamate moiety of the substrate. The second domain is the NADPH-binding domain, and the third C-terminal domain is responsible for dimerization.</text>
</comment>
<comment type="miscellaneous">
    <text evidence="1">During catalysis, the active site Cys acts as a nucleophile attacking the alpha-carbonyl group of tRNA-bound glutamate with the formation of a thioester intermediate between enzyme and glutamate, and the concomitant release of tRNA(Glu). The thioester intermediate is finally reduced by direct hydride transfer from NADPH, to form the product GSA.</text>
</comment>
<comment type="similarity">
    <text evidence="1">Belongs to the glutamyl-tRNA reductase family.</text>
</comment>
<feature type="chain" id="PRO_1000093177" description="Glutamyl-tRNA reductase">
    <location>
        <begin position="1"/>
        <end position="418"/>
    </location>
</feature>
<feature type="active site" description="Nucleophile" evidence="1">
    <location>
        <position position="50"/>
    </location>
</feature>
<feature type="binding site" evidence="1">
    <location>
        <begin position="49"/>
        <end position="52"/>
    </location>
    <ligand>
        <name>substrate</name>
    </ligand>
</feature>
<feature type="binding site" evidence="1">
    <location>
        <position position="108"/>
    </location>
    <ligand>
        <name>substrate</name>
    </ligand>
</feature>
<feature type="binding site" evidence="1">
    <location>
        <begin position="113"/>
        <end position="115"/>
    </location>
    <ligand>
        <name>substrate</name>
    </ligand>
</feature>
<feature type="binding site" evidence="1">
    <location>
        <position position="119"/>
    </location>
    <ligand>
        <name>substrate</name>
    </ligand>
</feature>
<feature type="binding site" evidence="1">
    <location>
        <begin position="188"/>
        <end position="193"/>
    </location>
    <ligand>
        <name>NADP(+)</name>
        <dbReference type="ChEBI" id="CHEBI:58349"/>
    </ligand>
</feature>
<feature type="site" description="Important for activity" evidence="1">
    <location>
        <position position="98"/>
    </location>
</feature>
<gene>
    <name evidence="1" type="primary">hemA</name>
    <name type="ordered locus">VFMJ11_0803</name>
</gene>
<proteinExistence type="inferred from homology"/>